<feature type="chain" id="PRO_0000258138" description="Large ribosomal subunit protein uL11">
    <location>
        <begin position="1"/>
        <end position="141"/>
    </location>
</feature>
<accession>Q3ATP9</accession>
<protein>
    <recommendedName>
        <fullName evidence="1">Large ribosomal subunit protein uL11</fullName>
    </recommendedName>
    <alternativeName>
        <fullName evidence="2">50S ribosomal protein L11</fullName>
    </alternativeName>
</protein>
<reference key="1">
    <citation type="submission" date="2005-08" db="EMBL/GenBank/DDBJ databases">
        <title>Complete sequence of Chlorobium chlorochromatii CaD3.</title>
        <authorList>
            <consortium name="US DOE Joint Genome Institute"/>
            <person name="Copeland A."/>
            <person name="Lucas S."/>
            <person name="Lapidus A."/>
            <person name="Barry K."/>
            <person name="Detter J.C."/>
            <person name="Glavina T."/>
            <person name="Hammon N."/>
            <person name="Israni S."/>
            <person name="Pitluck S."/>
            <person name="Bryant D."/>
            <person name="Schmutz J."/>
            <person name="Larimer F."/>
            <person name="Land M."/>
            <person name="Kyrpides N."/>
            <person name="Ivanova N."/>
            <person name="Richardson P."/>
        </authorList>
    </citation>
    <scope>NUCLEOTIDE SEQUENCE [LARGE SCALE GENOMIC DNA]</scope>
    <source>
        <strain>CaD3</strain>
    </source>
</reference>
<dbReference type="EMBL" id="CP000108">
    <property type="protein sequence ID" value="ABB27626.1"/>
    <property type="molecule type" value="Genomic_DNA"/>
</dbReference>
<dbReference type="SMR" id="Q3ATP9"/>
<dbReference type="STRING" id="340177.Cag_0353"/>
<dbReference type="KEGG" id="cch:Cag_0353"/>
<dbReference type="eggNOG" id="COG0080">
    <property type="taxonomic scope" value="Bacteria"/>
</dbReference>
<dbReference type="HOGENOM" id="CLU_074237_2_1_10"/>
<dbReference type="OrthoDB" id="9802408at2"/>
<dbReference type="GO" id="GO:0022625">
    <property type="term" value="C:cytosolic large ribosomal subunit"/>
    <property type="evidence" value="ECO:0007669"/>
    <property type="project" value="TreeGrafter"/>
</dbReference>
<dbReference type="GO" id="GO:0070180">
    <property type="term" value="F:large ribosomal subunit rRNA binding"/>
    <property type="evidence" value="ECO:0007669"/>
    <property type="project" value="UniProtKB-UniRule"/>
</dbReference>
<dbReference type="GO" id="GO:0003735">
    <property type="term" value="F:structural constituent of ribosome"/>
    <property type="evidence" value="ECO:0007669"/>
    <property type="project" value="InterPro"/>
</dbReference>
<dbReference type="GO" id="GO:0006412">
    <property type="term" value="P:translation"/>
    <property type="evidence" value="ECO:0007669"/>
    <property type="project" value="UniProtKB-UniRule"/>
</dbReference>
<dbReference type="CDD" id="cd00349">
    <property type="entry name" value="Ribosomal_L11"/>
    <property type="match status" value="1"/>
</dbReference>
<dbReference type="FunFam" id="1.10.10.250:FF:000001">
    <property type="entry name" value="50S ribosomal protein L11"/>
    <property type="match status" value="1"/>
</dbReference>
<dbReference type="FunFam" id="3.30.1550.10:FF:000001">
    <property type="entry name" value="50S ribosomal protein L11"/>
    <property type="match status" value="1"/>
</dbReference>
<dbReference type="Gene3D" id="1.10.10.250">
    <property type="entry name" value="Ribosomal protein L11, C-terminal domain"/>
    <property type="match status" value="1"/>
</dbReference>
<dbReference type="Gene3D" id="3.30.1550.10">
    <property type="entry name" value="Ribosomal protein L11/L12, N-terminal domain"/>
    <property type="match status" value="1"/>
</dbReference>
<dbReference type="HAMAP" id="MF_00736">
    <property type="entry name" value="Ribosomal_uL11"/>
    <property type="match status" value="1"/>
</dbReference>
<dbReference type="InterPro" id="IPR000911">
    <property type="entry name" value="Ribosomal_uL11"/>
</dbReference>
<dbReference type="InterPro" id="IPR006519">
    <property type="entry name" value="Ribosomal_uL11_bac-typ"/>
</dbReference>
<dbReference type="InterPro" id="IPR020783">
    <property type="entry name" value="Ribosomal_uL11_C"/>
</dbReference>
<dbReference type="InterPro" id="IPR036769">
    <property type="entry name" value="Ribosomal_uL11_C_sf"/>
</dbReference>
<dbReference type="InterPro" id="IPR020784">
    <property type="entry name" value="Ribosomal_uL11_N"/>
</dbReference>
<dbReference type="InterPro" id="IPR036796">
    <property type="entry name" value="Ribosomal_uL11_N_sf"/>
</dbReference>
<dbReference type="NCBIfam" id="TIGR01632">
    <property type="entry name" value="L11_bact"/>
    <property type="match status" value="1"/>
</dbReference>
<dbReference type="PANTHER" id="PTHR11661">
    <property type="entry name" value="60S RIBOSOMAL PROTEIN L12"/>
    <property type="match status" value="1"/>
</dbReference>
<dbReference type="PANTHER" id="PTHR11661:SF1">
    <property type="entry name" value="LARGE RIBOSOMAL SUBUNIT PROTEIN UL11M"/>
    <property type="match status" value="1"/>
</dbReference>
<dbReference type="Pfam" id="PF00298">
    <property type="entry name" value="Ribosomal_L11"/>
    <property type="match status" value="1"/>
</dbReference>
<dbReference type="Pfam" id="PF03946">
    <property type="entry name" value="Ribosomal_L11_N"/>
    <property type="match status" value="1"/>
</dbReference>
<dbReference type="SMART" id="SM00649">
    <property type="entry name" value="RL11"/>
    <property type="match status" value="1"/>
</dbReference>
<dbReference type="SUPFAM" id="SSF54747">
    <property type="entry name" value="Ribosomal L11/L12e N-terminal domain"/>
    <property type="match status" value="1"/>
</dbReference>
<dbReference type="SUPFAM" id="SSF46906">
    <property type="entry name" value="Ribosomal protein L11, C-terminal domain"/>
    <property type="match status" value="1"/>
</dbReference>
<keyword id="KW-0488">Methylation</keyword>
<keyword id="KW-0687">Ribonucleoprotein</keyword>
<keyword id="KW-0689">Ribosomal protein</keyword>
<keyword id="KW-0694">RNA-binding</keyword>
<keyword id="KW-0699">rRNA-binding</keyword>
<evidence type="ECO:0000255" key="1">
    <source>
        <dbReference type="HAMAP-Rule" id="MF_00736"/>
    </source>
</evidence>
<evidence type="ECO:0000305" key="2"/>
<comment type="function">
    <text evidence="1">Forms part of the ribosomal stalk which helps the ribosome interact with GTP-bound translation factors.</text>
</comment>
<comment type="subunit">
    <text evidence="1">Part of the ribosomal stalk of the 50S ribosomal subunit. Interacts with L10 and the large rRNA to form the base of the stalk. L10 forms an elongated spine to which L12 dimers bind in a sequential fashion forming a multimeric L10(L12)X complex.</text>
</comment>
<comment type="PTM">
    <text evidence="1">One or more lysine residues are methylated.</text>
</comment>
<comment type="similarity">
    <text evidence="1">Belongs to the universal ribosomal protein uL11 family.</text>
</comment>
<sequence>MAKKVIGFIKLQIPAGGANPAPPVGPALGQKGVNIMEFCKQFNAKTQADAGTIIPVVITVYSDKSFTFITKTPPAPVLLLKEANQKKGSGEPNRNKVGTVTGEQVRKIAELKMPDLNAVDLAGAEAMIRGTARSMGIVVQD</sequence>
<proteinExistence type="inferred from homology"/>
<gene>
    <name evidence="1" type="primary">rplK</name>
    <name type="ordered locus">Cag_0353</name>
</gene>
<organism>
    <name type="scientific">Chlorobium chlorochromatii (strain CaD3)</name>
    <dbReference type="NCBI Taxonomy" id="340177"/>
    <lineage>
        <taxon>Bacteria</taxon>
        <taxon>Pseudomonadati</taxon>
        <taxon>Chlorobiota</taxon>
        <taxon>Chlorobiia</taxon>
        <taxon>Chlorobiales</taxon>
        <taxon>Chlorobiaceae</taxon>
        <taxon>Chlorobium/Pelodictyon group</taxon>
        <taxon>Chlorobium</taxon>
    </lineage>
</organism>
<name>RL11_CHLCH</name>